<name>YR588_MIMIV</name>
<sequence length="397" mass="44579">MSSFIFPTYREVHSLQSTVSQLASNSGVKNKLANYGLNVSSVAWEDTSRYLNSCVGSNISDVTLKVNKSRMPIIRSNNFTDVTVDVPVSKLPKLVVGNHDGSQLKTVTLEEYLKDFHLYCGEFTRDRYNLFADRDQHVLTSSQACVLPLNSGEVEFAVDLYNYQSRNEPAVLVIVSTAYGTSAQVVCGGNTELYFNDNSVSRMFKAERIEDFRKSQGRSTSGPMTTEEKALNGIYIYQVPLVYKQERPNYESCFLGFVECDSLEASATFSNDSNNFFEHSARNSRGMSRAILSLGQEKGPYKGIKKTDGGIYKLERDQTKPIRLTVQFYMCTDTINLSDNNVEEISNQIRRIYDQGLNEGSLVVDSVTTKPGLHQPTQKRPTQTTSKPYINDEITML</sequence>
<reference key="1">
    <citation type="journal article" date="2004" name="Science">
        <title>The 1.2-megabase genome sequence of Mimivirus.</title>
        <authorList>
            <person name="Raoult D."/>
            <person name="Audic S."/>
            <person name="Robert C."/>
            <person name="Abergel C."/>
            <person name="Renesto P."/>
            <person name="Ogata H."/>
            <person name="La Scola B."/>
            <person name="Susan M."/>
            <person name="Claverie J.-M."/>
        </authorList>
    </citation>
    <scope>NUCLEOTIDE SEQUENCE [LARGE SCALE GENOMIC DNA]</scope>
    <source>
        <strain>Rowbotham-Bradford</strain>
    </source>
</reference>
<feature type="chain" id="PRO_0000247370" description="Uncharacterized protein R588">
    <location>
        <begin position="1"/>
        <end position="397"/>
    </location>
</feature>
<feature type="region of interest" description="Disordered" evidence="1">
    <location>
        <begin position="368"/>
        <end position="391"/>
    </location>
</feature>
<feature type="compositionally biased region" description="Polar residues" evidence="1">
    <location>
        <begin position="375"/>
        <end position="388"/>
    </location>
</feature>
<organism>
    <name type="scientific">Acanthamoeba polyphaga mimivirus</name>
    <name type="common">APMV</name>
    <dbReference type="NCBI Taxonomy" id="212035"/>
    <lineage>
        <taxon>Viruses</taxon>
        <taxon>Varidnaviria</taxon>
        <taxon>Bamfordvirae</taxon>
        <taxon>Nucleocytoviricota</taxon>
        <taxon>Megaviricetes</taxon>
        <taxon>Imitervirales</taxon>
        <taxon>Mimiviridae</taxon>
        <taxon>Megamimivirinae</taxon>
        <taxon>Mimivirus</taxon>
        <taxon>Mimivirus bradfordmassiliense</taxon>
    </lineage>
</organism>
<organismHost>
    <name type="scientific">Acanthamoeba polyphaga</name>
    <name type="common">Amoeba</name>
    <dbReference type="NCBI Taxonomy" id="5757"/>
</organismHost>
<keyword id="KW-1185">Reference proteome</keyword>
<gene>
    <name type="ordered locus">MIMI_R588</name>
</gene>
<dbReference type="EMBL" id="AY653733">
    <property type="protein sequence ID" value="AAV50851.1"/>
    <property type="molecule type" value="Genomic_DNA"/>
</dbReference>
<dbReference type="KEGG" id="vg:9925224"/>
<dbReference type="OrthoDB" id="7618at10239"/>
<dbReference type="Proteomes" id="UP000001134">
    <property type="component" value="Genome"/>
</dbReference>
<evidence type="ECO:0000256" key="1">
    <source>
        <dbReference type="SAM" id="MobiDB-lite"/>
    </source>
</evidence>
<accession>Q5UP50</accession>
<proteinExistence type="predicted"/>
<protein>
    <recommendedName>
        <fullName>Uncharacterized protein R588</fullName>
    </recommendedName>
</protein>